<accession>P46228</accession>
<accession>Q5N3U4</accession>
<feature type="initiator methionine" description="Removed" evidence="2">
    <location>
        <position position="1"/>
    </location>
</feature>
<feature type="chain" id="PRO_0000196056" description="Small ribosomal subunit protein bS1">
    <location>
        <begin position="2"/>
        <end position="307"/>
    </location>
</feature>
<feature type="domain" description="S1 motif 1" evidence="1">
    <location>
        <begin position="32"/>
        <end position="101"/>
    </location>
</feature>
<feature type="domain" description="S1 motif 2" evidence="1">
    <location>
        <begin position="119"/>
        <end position="183"/>
    </location>
</feature>
<feature type="domain" description="S1 motif 3" evidence="1">
    <location>
        <begin position="197"/>
        <end position="265"/>
    </location>
</feature>
<feature type="sequence conflict" description="In Ref. 1; BAA05946." evidence="3" ref="1">
    <original>L</original>
    <variation>F</variation>
    <location>
        <position position="59"/>
    </location>
</feature>
<feature type="sequence conflict" description="In Ref. 1; BAA05946." evidence="3" ref="1">
    <original>D</original>
    <variation>L</variation>
    <location>
        <position position="273"/>
    </location>
</feature>
<keyword id="KW-0903">Direct protein sequencing</keyword>
<keyword id="KW-0677">Repeat</keyword>
<keyword id="KW-0687">Ribonucleoprotein</keyword>
<keyword id="KW-0689">Ribosomal protein</keyword>
<keyword id="KW-0694">RNA-binding</keyword>
<gene>
    <name type="primary">rpsA</name>
    <name type="synonym">rps1</name>
    <name type="ordered locus">syc0836_d</name>
</gene>
<proteinExistence type="evidence at protein level"/>
<name>RS1_SYNP6</name>
<sequence>MVTQDIPAVDIGFTHEDFAALLDQYDYHFNPGDTVVGTVFNLEPRGALIDIGAKTAAFLPVQEMSINRVESPEEVLQPSEMREFFILSDENEDGQLTLSIRRIEYMRAWERVRQLQTEDATVRSEVFATNRGGALVRIEGLRGFIPGSHISTRKAKEDLVGEELPLKFLEVDEDRNRLVLSHRRALVERKMNRLEVGEVVVGAVRGIKPYGAFIDIGGVSGLLHISEISHDHIETPHSVFNVNDEVKVMIIDLDAERGRISLSTKQLEPEPGDMVRNPEVVYEKAEEMAAQYREKLKQQAEGLVVTE</sequence>
<evidence type="ECO:0000255" key="1">
    <source>
        <dbReference type="PROSITE-ProRule" id="PRU00180"/>
    </source>
</evidence>
<evidence type="ECO:0000269" key="2">
    <source>
    </source>
</evidence>
<evidence type="ECO:0000305" key="3"/>
<dbReference type="EMBL" id="D28752">
    <property type="protein sequence ID" value="BAA05946.1"/>
    <property type="molecule type" value="Genomic_DNA"/>
</dbReference>
<dbReference type="EMBL" id="AP008231">
    <property type="protein sequence ID" value="BAD79026.1"/>
    <property type="molecule type" value="Genomic_DNA"/>
</dbReference>
<dbReference type="RefSeq" id="WP_011243148.1">
    <property type="nucleotide sequence ID" value="NZ_CP085785.1"/>
</dbReference>
<dbReference type="SMR" id="P46228"/>
<dbReference type="KEGG" id="syc:syc0836_d"/>
<dbReference type="eggNOG" id="COG0539">
    <property type="taxonomic scope" value="Bacteria"/>
</dbReference>
<dbReference type="Proteomes" id="UP000001175">
    <property type="component" value="Chromosome"/>
</dbReference>
<dbReference type="GO" id="GO:1990904">
    <property type="term" value="C:ribonucleoprotein complex"/>
    <property type="evidence" value="ECO:0007669"/>
    <property type="project" value="UniProtKB-KW"/>
</dbReference>
<dbReference type="GO" id="GO:0005840">
    <property type="term" value="C:ribosome"/>
    <property type="evidence" value="ECO:0007669"/>
    <property type="project" value="UniProtKB-KW"/>
</dbReference>
<dbReference type="GO" id="GO:0003729">
    <property type="term" value="F:mRNA binding"/>
    <property type="evidence" value="ECO:0007669"/>
    <property type="project" value="TreeGrafter"/>
</dbReference>
<dbReference type="GO" id="GO:0003735">
    <property type="term" value="F:structural constituent of ribosome"/>
    <property type="evidence" value="ECO:0007669"/>
    <property type="project" value="TreeGrafter"/>
</dbReference>
<dbReference type="GO" id="GO:0006412">
    <property type="term" value="P:translation"/>
    <property type="evidence" value="ECO:0007669"/>
    <property type="project" value="TreeGrafter"/>
</dbReference>
<dbReference type="CDD" id="cd05687">
    <property type="entry name" value="S1_RPS1_repeat_ec1_hs1"/>
    <property type="match status" value="1"/>
</dbReference>
<dbReference type="CDD" id="cd04465">
    <property type="entry name" value="S1_RPS1_repeat_ec2_hs2"/>
    <property type="match status" value="1"/>
</dbReference>
<dbReference type="FunFam" id="2.40.50.140:FF:000078">
    <property type="entry name" value="30S ribosomal protein S1"/>
    <property type="match status" value="1"/>
</dbReference>
<dbReference type="FunFam" id="2.40.50.140:FF:000102">
    <property type="entry name" value="30S ribosomal protein S1"/>
    <property type="match status" value="1"/>
</dbReference>
<dbReference type="FunFam" id="2.40.50.140:FF:000126">
    <property type="entry name" value="30S ribosomal protein S1"/>
    <property type="match status" value="1"/>
</dbReference>
<dbReference type="Gene3D" id="2.40.50.140">
    <property type="entry name" value="Nucleic acid-binding proteins"/>
    <property type="match status" value="3"/>
</dbReference>
<dbReference type="InterPro" id="IPR012340">
    <property type="entry name" value="NA-bd_OB-fold"/>
</dbReference>
<dbReference type="InterPro" id="IPR050437">
    <property type="entry name" value="Ribos_protein_bS1-like"/>
</dbReference>
<dbReference type="InterPro" id="IPR035104">
    <property type="entry name" value="Ribosomal_protein_S1-like"/>
</dbReference>
<dbReference type="InterPro" id="IPR003029">
    <property type="entry name" value="S1_domain"/>
</dbReference>
<dbReference type="NCBIfam" id="NF005639">
    <property type="entry name" value="PRK07400.1"/>
    <property type="match status" value="1"/>
</dbReference>
<dbReference type="PANTHER" id="PTHR10724">
    <property type="entry name" value="30S RIBOSOMAL PROTEIN S1"/>
    <property type="match status" value="1"/>
</dbReference>
<dbReference type="PANTHER" id="PTHR10724:SF7">
    <property type="entry name" value="SMALL RIBOSOMAL SUBUNIT PROTEIN BS1C"/>
    <property type="match status" value="1"/>
</dbReference>
<dbReference type="Pfam" id="PF00575">
    <property type="entry name" value="S1"/>
    <property type="match status" value="3"/>
</dbReference>
<dbReference type="PRINTS" id="PR00681">
    <property type="entry name" value="RIBOSOMALS1"/>
</dbReference>
<dbReference type="SMART" id="SM00316">
    <property type="entry name" value="S1"/>
    <property type="match status" value="3"/>
</dbReference>
<dbReference type="SUPFAM" id="SSF50249">
    <property type="entry name" value="Nucleic acid-binding proteins"/>
    <property type="match status" value="3"/>
</dbReference>
<dbReference type="PROSITE" id="PS50126">
    <property type="entry name" value="S1"/>
    <property type="match status" value="3"/>
</dbReference>
<comment type="function">
    <text>Binds mRNA.</text>
</comment>
<comment type="similarity">
    <text evidence="3">Belongs to the bacterial ribosomal protein bS1 family.</text>
</comment>
<organism>
    <name type="scientific">Synechococcus sp. (strain ATCC 27144 / PCC 6301 / SAUG 1402/1)</name>
    <name type="common">Anacystis nidulans</name>
    <dbReference type="NCBI Taxonomy" id="269084"/>
    <lineage>
        <taxon>Bacteria</taxon>
        <taxon>Bacillati</taxon>
        <taxon>Cyanobacteriota</taxon>
        <taxon>Cyanophyceae</taxon>
        <taxon>Synechococcales</taxon>
        <taxon>Synechococcaceae</taxon>
        <taxon>Synechococcus</taxon>
    </lineage>
</organism>
<reference key="1">
    <citation type="journal article" date="1995" name="Mol. Gen. Genet.">
        <title>Structure and expression of the gene encoding ribosomal protein S1 from the cyanobacterium Synechococcus sp. strain PCC 6301: striking sequence similarity to the chloroplast ribosomal protein CS1.</title>
        <authorList>
            <person name="Sugita M."/>
            <person name="Sugita C."/>
            <person name="Sugiura M."/>
        </authorList>
    </citation>
    <scope>NUCLEOTIDE SEQUENCE [GENOMIC DNA]</scope>
    <scope>PROTEIN SEQUENCE OF 2-14</scope>
</reference>
<reference key="2">
    <citation type="journal article" date="2007" name="Photosyn. Res.">
        <title>Complete nucleotide sequence of the freshwater unicellular cyanobacterium Synechococcus elongatus PCC 6301 chromosome: gene content and organization.</title>
        <authorList>
            <person name="Sugita C."/>
            <person name="Ogata K."/>
            <person name="Shikata M."/>
            <person name="Jikuya H."/>
            <person name="Takano J."/>
            <person name="Furumichi M."/>
            <person name="Kanehisa M."/>
            <person name="Omata T."/>
            <person name="Sugiura M."/>
            <person name="Sugita M."/>
        </authorList>
    </citation>
    <scope>NUCLEOTIDE SEQUENCE [LARGE SCALE GENOMIC DNA]</scope>
    <source>
        <strain>ATCC 27144 / PCC 6301 / SAUG 1402/1</strain>
    </source>
</reference>
<protein>
    <recommendedName>
        <fullName evidence="3">Small ribosomal subunit protein bS1</fullName>
    </recommendedName>
    <alternativeName>
        <fullName>30S ribosomal protein S1</fullName>
    </alternativeName>
</protein>